<dbReference type="EMBL" id="CP001618">
    <property type="protein sequence ID" value="ACQ80634.1"/>
    <property type="molecule type" value="Genomic_DNA"/>
</dbReference>
<dbReference type="RefSeq" id="WP_015882874.1">
    <property type="nucleotide sequence ID" value="NC_012669.1"/>
</dbReference>
<dbReference type="SMR" id="C5BW33"/>
<dbReference type="STRING" id="471853.Bcav_2384"/>
<dbReference type="KEGG" id="bcv:Bcav_2384"/>
<dbReference type="eggNOG" id="COG0291">
    <property type="taxonomic scope" value="Bacteria"/>
</dbReference>
<dbReference type="HOGENOM" id="CLU_169643_4_2_11"/>
<dbReference type="OrthoDB" id="9804851at2"/>
<dbReference type="Proteomes" id="UP000007962">
    <property type="component" value="Chromosome"/>
</dbReference>
<dbReference type="GO" id="GO:0022625">
    <property type="term" value="C:cytosolic large ribosomal subunit"/>
    <property type="evidence" value="ECO:0007669"/>
    <property type="project" value="TreeGrafter"/>
</dbReference>
<dbReference type="GO" id="GO:0003735">
    <property type="term" value="F:structural constituent of ribosome"/>
    <property type="evidence" value="ECO:0007669"/>
    <property type="project" value="InterPro"/>
</dbReference>
<dbReference type="GO" id="GO:0006412">
    <property type="term" value="P:translation"/>
    <property type="evidence" value="ECO:0007669"/>
    <property type="project" value="UniProtKB-UniRule"/>
</dbReference>
<dbReference type="FunFam" id="4.10.410.60:FF:000001">
    <property type="entry name" value="50S ribosomal protein L35"/>
    <property type="match status" value="1"/>
</dbReference>
<dbReference type="Gene3D" id="4.10.410.60">
    <property type="match status" value="1"/>
</dbReference>
<dbReference type="HAMAP" id="MF_00514">
    <property type="entry name" value="Ribosomal_bL35"/>
    <property type="match status" value="1"/>
</dbReference>
<dbReference type="InterPro" id="IPR001706">
    <property type="entry name" value="Ribosomal_bL35"/>
</dbReference>
<dbReference type="InterPro" id="IPR021137">
    <property type="entry name" value="Ribosomal_bL35-like"/>
</dbReference>
<dbReference type="InterPro" id="IPR037229">
    <property type="entry name" value="Ribosomal_bL35_sf"/>
</dbReference>
<dbReference type="NCBIfam" id="TIGR00001">
    <property type="entry name" value="rpmI_bact"/>
    <property type="match status" value="1"/>
</dbReference>
<dbReference type="PANTHER" id="PTHR33343">
    <property type="entry name" value="54S RIBOSOMAL PROTEIN BL35M"/>
    <property type="match status" value="1"/>
</dbReference>
<dbReference type="PANTHER" id="PTHR33343:SF1">
    <property type="entry name" value="LARGE RIBOSOMAL SUBUNIT PROTEIN BL35M"/>
    <property type="match status" value="1"/>
</dbReference>
<dbReference type="Pfam" id="PF01632">
    <property type="entry name" value="Ribosomal_L35p"/>
    <property type="match status" value="1"/>
</dbReference>
<dbReference type="PRINTS" id="PR00064">
    <property type="entry name" value="RIBOSOMALL35"/>
</dbReference>
<dbReference type="SUPFAM" id="SSF143034">
    <property type="entry name" value="L35p-like"/>
    <property type="match status" value="1"/>
</dbReference>
<proteinExistence type="inferred from homology"/>
<protein>
    <recommendedName>
        <fullName evidence="1">Large ribosomal subunit protein bL35</fullName>
    </recommendedName>
    <alternativeName>
        <fullName evidence="3">50S ribosomal protein L35</fullName>
    </alternativeName>
</protein>
<gene>
    <name evidence="1" type="primary">rpmI</name>
    <name type="ordered locus">Bcav_2384</name>
</gene>
<keyword id="KW-1185">Reference proteome</keyword>
<keyword id="KW-0687">Ribonucleoprotein</keyword>
<keyword id="KW-0689">Ribosomal protein</keyword>
<name>RL35_BEUC1</name>
<comment type="similarity">
    <text evidence="1">Belongs to the bacterial ribosomal protein bL35 family.</text>
</comment>
<feature type="chain" id="PRO_1000211692" description="Large ribosomal subunit protein bL35">
    <location>
        <begin position="1"/>
        <end position="64"/>
    </location>
</feature>
<feature type="region of interest" description="Disordered" evidence="2">
    <location>
        <begin position="1"/>
        <end position="64"/>
    </location>
</feature>
<organism>
    <name type="scientific">Beutenbergia cavernae (strain ATCC BAA-8 / DSM 12333 / CCUG 43141 / JCM 11478 / NBRC 16432 / NCIMB 13614 / HKI 0122)</name>
    <dbReference type="NCBI Taxonomy" id="471853"/>
    <lineage>
        <taxon>Bacteria</taxon>
        <taxon>Bacillati</taxon>
        <taxon>Actinomycetota</taxon>
        <taxon>Actinomycetes</taxon>
        <taxon>Micrococcales</taxon>
        <taxon>Beutenbergiaceae</taxon>
        <taxon>Beutenbergia</taxon>
    </lineage>
</organism>
<reference key="1">
    <citation type="journal article" date="2009" name="Stand. Genomic Sci.">
        <title>Complete genome sequence of Beutenbergia cavernae type strain (HKI 0122).</title>
        <authorList>
            <person name="Land M."/>
            <person name="Pukall R."/>
            <person name="Abt B."/>
            <person name="Goker M."/>
            <person name="Rohde M."/>
            <person name="Glavina Del Rio T."/>
            <person name="Tice H."/>
            <person name="Copeland A."/>
            <person name="Cheng J.F."/>
            <person name="Lucas S."/>
            <person name="Chen F."/>
            <person name="Nolan M."/>
            <person name="Bruce D."/>
            <person name="Goodwin L."/>
            <person name="Pitluck S."/>
            <person name="Ivanova N."/>
            <person name="Mavromatis K."/>
            <person name="Ovchinnikova G."/>
            <person name="Pati A."/>
            <person name="Chen A."/>
            <person name="Palaniappan K."/>
            <person name="Hauser L."/>
            <person name="Chang Y.J."/>
            <person name="Jefferies C.C."/>
            <person name="Saunders E."/>
            <person name="Brettin T."/>
            <person name="Detter J.C."/>
            <person name="Han C."/>
            <person name="Chain P."/>
            <person name="Bristow J."/>
            <person name="Eisen J.A."/>
            <person name="Markowitz V."/>
            <person name="Hugenholtz P."/>
            <person name="Kyrpides N.C."/>
            <person name="Klenk H.P."/>
            <person name="Lapidus A."/>
        </authorList>
    </citation>
    <scope>NUCLEOTIDE SEQUENCE [LARGE SCALE GENOMIC DNA]</scope>
    <source>
        <strain>ATCC BAA-8 / DSM 12333 / CCUG 43141 / JCM 11478 / NBRC 16432 / NCIMB 13614 / HKI 0122</strain>
    </source>
</reference>
<evidence type="ECO:0000255" key="1">
    <source>
        <dbReference type="HAMAP-Rule" id="MF_00514"/>
    </source>
</evidence>
<evidence type="ECO:0000256" key="2">
    <source>
        <dbReference type="SAM" id="MobiDB-lite"/>
    </source>
</evidence>
<evidence type="ECO:0000305" key="3"/>
<sequence length="64" mass="7293">MPKNKTNSGAKKRFRVTGSGKIMHKRAHQTHKFEERSRSSVRRLSNDAEVSSADRKSIKKLLGK</sequence>
<accession>C5BW33</accession>